<organism>
    <name type="scientific">Clostridium botulinum (strain Hall / ATCC 3502 / NCTC 13319 / Type A)</name>
    <dbReference type="NCBI Taxonomy" id="441771"/>
    <lineage>
        <taxon>Bacteria</taxon>
        <taxon>Bacillati</taxon>
        <taxon>Bacillota</taxon>
        <taxon>Clostridia</taxon>
        <taxon>Eubacteriales</taxon>
        <taxon>Clostridiaceae</taxon>
        <taxon>Clostridium</taxon>
    </lineage>
</organism>
<protein>
    <recommendedName>
        <fullName evidence="1">Large ribosomal subunit protein uL3</fullName>
    </recommendedName>
    <alternativeName>
        <fullName evidence="3">50S ribosomal protein L3</fullName>
    </alternativeName>
</protein>
<evidence type="ECO:0000255" key="1">
    <source>
        <dbReference type="HAMAP-Rule" id="MF_01325"/>
    </source>
</evidence>
<evidence type="ECO:0000256" key="2">
    <source>
        <dbReference type="SAM" id="MobiDB-lite"/>
    </source>
</evidence>
<evidence type="ECO:0000305" key="3"/>
<dbReference type="EMBL" id="CP000727">
    <property type="protein sequence ID" value="ABS39139.1"/>
    <property type="molecule type" value="Genomic_DNA"/>
</dbReference>
<dbReference type="EMBL" id="AM412317">
    <property type="protein sequence ID" value="CAL85041.1"/>
    <property type="molecule type" value="Genomic_DNA"/>
</dbReference>
<dbReference type="RefSeq" id="WP_012048354.1">
    <property type="nucleotide sequence ID" value="NC_009698.1"/>
</dbReference>
<dbReference type="RefSeq" id="YP_001255962.1">
    <property type="nucleotide sequence ID" value="NC_009495.1"/>
</dbReference>
<dbReference type="RefSeq" id="YP_001389203.1">
    <property type="nucleotide sequence ID" value="NC_009698.1"/>
</dbReference>
<dbReference type="SMR" id="A5I7K6"/>
<dbReference type="GeneID" id="5187746"/>
<dbReference type="KEGG" id="cbh:CLC_3425"/>
<dbReference type="KEGG" id="cbo:CBO3480"/>
<dbReference type="PATRIC" id="fig|413999.7.peg.3457"/>
<dbReference type="HOGENOM" id="CLU_044142_4_1_9"/>
<dbReference type="PRO" id="PR:A5I7K6"/>
<dbReference type="Proteomes" id="UP000001986">
    <property type="component" value="Chromosome"/>
</dbReference>
<dbReference type="GO" id="GO:0022625">
    <property type="term" value="C:cytosolic large ribosomal subunit"/>
    <property type="evidence" value="ECO:0000318"/>
    <property type="project" value="GO_Central"/>
</dbReference>
<dbReference type="GO" id="GO:0019843">
    <property type="term" value="F:rRNA binding"/>
    <property type="evidence" value="ECO:0007669"/>
    <property type="project" value="UniProtKB-UniRule"/>
</dbReference>
<dbReference type="GO" id="GO:0003735">
    <property type="term" value="F:structural constituent of ribosome"/>
    <property type="evidence" value="ECO:0000318"/>
    <property type="project" value="GO_Central"/>
</dbReference>
<dbReference type="GO" id="GO:0006412">
    <property type="term" value="P:translation"/>
    <property type="evidence" value="ECO:0007669"/>
    <property type="project" value="UniProtKB-UniRule"/>
</dbReference>
<dbReference type="FunFam" id="2.40.30.10:FF:000004">
    <property type="entry name" value="50S ribosomal protein L3"/>
    <property type="match status" value="1"/>
</dbReference>
<dbReference type="FunFam" id="3.30.160.810:FF:000001">
    <property type="entry name" value="50S ribosomal protein L3"/>
    <property type="match status" value="1"/>
</dbReference>
<dbReference type="Gene3D" id="3.30.160.810">
    <property type="match status" value="1"/>
</dbReference>
<dbReference type="Gene3D" id="2.40.30.10">
    <property type="entry name" value="Translation factors"/>
    <property type="match status" value="1"/>
</dbReference>
<dbReference type="HAMAP" id="MF_01325_B">
    <property type="entry name" value="Ribosomal_uL3_B"/>
    <property type="match status" value="1"/>
</dbReference>
<dbReference type="InterPro" id="IPR000597">
    <property type="entry name" value="Ribosomal_uL3"/>
</dbReference>
<dbReference type="InterPro" id="IPR019927">
    <property type="entry name" value="Ribosomal_uL3_bac/org-type"/>
</dbReference>
<dbReference type="InterPro" id="IPR019926">
    <property type="entry name" value="Ribosomal_uL3_CS"/>
</dbReference>
<dbReference type="InterPro" id="IPR009000">
    <property type="entry name" value="Transl_B-barrel_sf"/>
</dbReference>
<dbReference type="NCBIfam" id="TIGR03625">
    <property type="entry name" value="L3_bact"/>
    <property type="match status" value="1"/>
</dbReference>
<dbReference type="PANTHER" id="PTHR11229">
    <property type="entry name" value="50S RIBOSOMAL PROTEIN L3"/>
    <property type="match status" value="1"/>
</dbReference>
<dbReference type="PANTHER" id="PTHR11229:SF16">
    <property type="entry name" value="LARGE RIBOSOMAL SUBUNIT PROTEIN UL3C"/>
    <property type="match status" value="1"/>
</dbReference>
<dbReference type="Pfam" id="PF00297">
    <property type="entry name" value="Ribosomal_L3"/>
    <property type="match status" value="1"/>
</dbReference>
<dbReference type="SUPFAM" id="SSF50447">
    <property type="entry name" value="Translation proteins"/>
    <property type="match status" value="1"/>
</dbReference>
<dbReference type="PROSITE" id="PS00474">
    <property type="entry name" value="RIBOSOMAL_L3"/>
    <property type="match status" value="1"/>
</dbReference>
<name>RL3_CLOBH</name>
<proteinExistence type="inferred from homology"/>
<gene>
    <name evidence="1" type="primary">rplC</name>
    <name type="ordered locus">CBO3480</name>
    <name type="ordered locus">CLC_3425</name>
</gene>
<feature type="chain" id="PRO_1000052033" description="Large ribosomal subunit protein uL3">
    <location>
        <begin position="1"/>
        <end position="209"/>
    </location>
</feature>
<feature type="region of interest" description="Disordered" evidence="2">
    <location>
        <begin position="141"/>
        <end position="163"/>
    </location>
</feature>
<comment type="function">
    <text evidence="1">One of the primary rRNA binding proteins, it binds directly near the 3'-end of the 23S rRNA, where it nucleates assembly of the 50S subunit.</text>
</comment>
<comment type="subunit">
    <text evidence="1">Part of the 50S ribosomal subunit. Forms a cluster with proteins L14 and L19.</text>
</comment>
<comment type="similarity">
    <text evidence="1">Belongs to the universal ribosomal protein uL3 family.</text>
</comment>
<sequence>MKKAILGKKLGMTQIFNENGKVIPVTVIEAGPCTVIQKKTVEKDGYEAIQVAFGDIREKLRNKPIKGHFAKAGVSVKRHIKEFKLEDSNSLEIGQEIKADVFEAGERVDISGVSKGKGFQGTIRRWNAHRGPMSHGSKFHRAVGSMGASSDPSRTFKNKRMPGHMGNVNTTVLNLEVVRIIPEKNLILIKGGVPGPNKGLVQIRNTVKA</sequence>
<keyword id="KW-1185">Reference proteome</keyword>
<keyword id="KW-0687">Ribonucleoprotein</keyword>
<keyword id="KW-0689">Ribosomal protein</keyword>
<keyword id="KW-0694">RNA-binding</keyword>
<keyword id="KW-0699">rRNA-binding</keyword>
<reference key="1">
    <citation type="journal article" date="2007" name="Genome Res.">
        <title>Genome sequence of a proteolytic (Group I) Clostridium botulinum strain Hall A and comparative analysis of the clostridial genomes.</title>
        <authorList>
            <person name="Sebaihia M."/>
            <person name="Peck M.W."/>
            <person name="Minton N.P."/>
            <person name="Thomson N.R."/>
            <person name="Holden M.T.G."/>
            <person name="Mitchell W.J."/>
            <person name="Carter A.T."/>
            <person name="Bentley S.D."/>
            <person name="Mason D.R."/>
            <person name="Crossman L."/>
            <person name="Paul C.J."/>
            <person name="Ivens A."/>
            <person name="Wells-Bennik M.H.J."/>
            <person name="Davis I.J."/>
            <person name="Cerdeno-Tarraga A.M."/>
            <person name="Churcher C."/>
            <person name="Quail M.A."/>
            <person name="Chillingworth T."/>
            <person name="Feltwell T."/>
            <person name="Fraser A."/>
            <person name="Goodhead I."/>
            <person name="Hance Z."/>
            <person name="Jagels K."/>
            <person name="Larke N."/>
            <person name="Maddison M."/>
            <person name="Moule S."/>
            <person name="Mungall K."/>
            <person name="Norbertczak H."/>
            <person name="Rabbinowitsch E."/>
            <person name="Sanders M."/>
            <person name="Simmonds M."/>
            <person name="White B."/>
            <person name="Whithead S."/>
            <person name="Parkhill J."/>
        </authorList>
    </citation>
    <scope>NUCLEOTIDE SEQUENCE [LARGE SCALE GENOMIC DNA]</scope>
    <source>
        <strain>Hall / ATCC 3502 / NCTC 13319 / Type A</strain>
    </source>
</reference>
<reference key="2">
    <citation type="journal article" date="2007" name="PLoS ONE">
        <title>Analysis of the neurotoxin complex genes in Clostridium botulinum A1-A4 and B1 strains: BoNT/A3, /Ba4 and /B1 clusters are located within plasmids.</title>
        <authorList>
            <person name="Smith T.J."/>
            <person name="Hill K.K."/>
            <person name="Foley B.T."/>
            <person name="Detter J.C."/>
            <person name="Munk A.C."/>
            <person name="Bruce D.C."/>
            <person name="Doggett N.A."/>
            <person name="Smith L.A."/>
            <person name="Marks J.D."/>
            <person name="Xie G."/>
            <person name="Brettin T.S."/>
        </authorList>
    </citation>
    <scope>NUCLEOTIDE SEQUENCE [LARGE SCALE GENOMIC DNA]</scope>
    <source>
        <strain>Hall / ATCC 3502 / NCTC 13319 / Type A</strain>
    </source>
</reference>
<accession>A5I7K6</accession>
<accession>A7G8T8</accession>